<sequence>MLQPKRTKFRKAFKGRIHGAAKGGFELSFGQFGLKALEPERITARQIEAARRAMTRHMKRAGRVWIRIFPDVPVSKKPTEVRMGKGKGAPELWAVRVAPGRIMFELDGVPVDLAREALQLASAKLPIKTRFIQRIQE</sequence>
<organism>
    <name type="scientific">Methylocella silvestris (strain DSM 15510 / CIP 108128 / LMG 27833 / NCIMB 13906 / BL2)</name>
    <dbReference type="NCBI Taxonomy" id="395965"/>
    <lineage>
        <taxon>Bacteria</taxon>
        <taxon>Pseudomonadati</taxon>
        <taxon>Pseudomonadota</taxon>
        <taxon>Alphaproteobacteria</taxon>
        <taxon>Hyphomicrobiales</taxon>
        <taxon>Beijerinckiaceae</taxon>
        <taxon>Methylocella</taxon>
    </lineage>
</organism>
<evidence type="ECO:0000255" key="1">
    <source>
        <dbReference type="HAMAP-Rule" id="MF_01342"/>
    </source>
</evidence>
<evidence type="ECO:0000305" key="2"/>
<gene>
    <name evidence="1" type="primary">rplP</name>
    <name type="ordered locus">Msil_0573</name>
</gene>
<name>RL16_METSB</name>
<accession>B8ELF6</accession>
<feature type="chain" id="PRO_1000166368" description="Large ribosomal subunit protein uL16">
    <location>
        <begin position="1"/>
        <end position="137"/>
    </location>
</feature>
<keyword id="KW-1185">Reference proteome</keyword>
<keyword id="KW-0687">Ribonucleoprotein</keyword>
<keyword id="KW-0689">Ribosomal protein</keyword>
<keyword id="KW-0694">RNA-binding</keyword>
<keyword id="KW-0699">rRNA-binding</keyword>
<keyword id="KW-0820">tRNA-binding</keyword>
<proteinExistence type="inferred from homology"/>
<reference key="1">
    <citation type="journal article" date="2010" name="J. Bacteriol.">
        <title>Complete genome sequence of the aerobic facultative methanotroph Methylocella silvestris BL2.</title>
        <authorList>
            <person name="Chen Y."/>
            <person name="Crombie A."/>
            <person name="Rahman M.T."/>
            <person name="Dedysh S.N."/>
            <person name="Liesack W."/>
            <person name="Stott M.B."/>
            <person name="Alam M."/>
            <person name="Theisen A.R."/>
            <person name="Murrell J.C."/>
            <person name="Dunfield P.F."/>
        </authorList>
    </citation>
    <scope>NUCLEOTIDE SEQUENCE [LARGE SCALE GENOMIC DNA]</scope>
    <source>
        <strain>DSM 15510 / CIP 108128 / LMG 27833 / NCIMB 13906 / BL2</strain>
    </source>
</reference>
<protein>
    <recommendedName>
        <fullName evidence="1">Large ribosomal subunit protein uL16</fullName>
    </recommendedName>
    <alternativeName>
        <fullName evidence="2">50S ribosomal protein L16</fullName>
    </alternativeName>
</protein>
<dbReference type="EMBL" id="CP001280">
    <property type="protein sequence ID" value="ACK49545.1"/>
    <property type="molecule type" value="Genomic_DNA"/>
</dbReference>
<dbReference type="RefSeq" id="WP_012589615.1">
    <property type="nucleotide sequence ID" value="NC_011666.1"/>
</dbReference>
<dbReference type="SMR" id="B8ELF6"/>
<dbReference type="STRING" id="395965.Msil_0573"/>
<dbReference type="KEGG" id="msl:Msil_0573"/>
<dbReference type="eggNOG" id="COG0197">
    <property type="taxonomic scope" value="Bacteria"/>
</dbReference>
<dbReference type="HOGENOM" id="CLU_078858_2_1_5"/>
<dbReference type="OrthoDB" id="9802589at2"/>
<dbReference type="Proteomes" id="UP000002257">
    <property type="component" value="Chromosome"/>
</dbReference>
<dbReference type="GO" id="GO:0022625">
    <property type="term" value="C:cytosolic large ribosomal subunit"/>
    <property type="evidence" value="ECO:0007669"/>
    <property type="project" value="TreeGrafter"/>
</dbReference>
<dbReference type="GO" id="GO:0019843">
    <property type="term" value="F:rRNA binding"/>
    <property type="evidence" value="ECO:0007669"/>
    <property type="project" value="UniProtKB-UniRule"/>
</dbReference>
<dbReference type="GO" id="GO:0003735">
    <property type="term" value="F:structural constituent of ribosome"/>
    <property type="evidence" value="ECO:0007669"/>
    <property type="project" value="InterPro"/>
</dbReference>
<dbReference type="GO" id="GO:0000049">
    <property type="term" value="F:tRNA binding"/>
    <property type="evidence" value="ECO:0007669"/>
    <property type="project" value="UniProtKB-KW"/>
</dbReference>
<dbReference type="GO" id="GO:0006412">
    <property type="term" value="P:translation"/>
    <property type="evidence" value="ECO:0007669"/>
    <property type="project" value="UniProtKB-UniRule"/>
</dbReference>
<dbReference type="CDD" id="cd01433">
    <property type="entry name" value="Ribosomal_L16_L10e"/>
    <property type="match status" value="1"/>
</dbReference>
<dbReference type="FunFam" id="3.90.1170.10:FF:000001">
    <property type="entry name" value="50S ribosomal protein L16"/>
    <property type="match status" value="1"/>
</dbReference>
<dbReference type="Gene3D" id="3.90.1170.10">
    <property type="entry name" value="Ribosomal protein L10e/L16"/>
    <property type="match status" value="1"/>
</dbReference>
<dbReference type="HAMAP" id="MF_01342">
    <property type="entry name" value="Ribosomal_uL16"/>
    <property type="match status" value="1"/>
</dbReference>
<dbReference type="InterPro" id="IPR047873">
    <property type="entry name" value="Ribosomal_uL16"/>
</dbReference>
<dbReference type="InterPro" id="IPR000114">
    <property type="entry name" value="Ribosomal_uL16_bact-type"/>
</dbReference>
<dbReference type="InterPro" id="IPR020798">
    <property type="entry name" value="Ribosomal_uL16_CS"/>
</dbReference>
<dbReference type="InterPro" id="IPR016180">
    <property type="entry name" value="Ribosomal_uL16_dom"/>
</dbReference>
<dbReference type="InterPro" id="IPR036920">
    <property type="entry name" value="Ribosomal_uL16_sf"/>
</dbReference>
<dbReference type="NCBIfam" id="TIGR01164">
    <property type="entry name" value="rplP_bact"/>
    <property type="match status" value="1"/>
</dbReference>
<dbReference type="PANTHER" id="PTHR12220">
    <property type="entry name" value="50S/60S RIBOSOMAL PROTEIN L16"/>
    <property type="match status" value="1"/>
</dbReference>
<dbReference type="PANTHER" id="PTHR12220:SF13">
    <property type="entry name" value="LARGE RIBOSOMAL SUBUNIT PROTEIN UL16M"/>
    <property type="match status" value="1"/>
</dbReference>
<dbReference type="Pfam" id="PF00252">
    <property type="entry name" value="Ribosomal_L16"/>
    <property type="match status" value="1"/>
</dbReference>
<dbReference type="PRINTS" id="PR00060">
    <property type="entry name" value="RIBOSOMALL16"/>
</dbReference>
<dbReference type="SUPFAM" id="SSF54686">
    <property type="entry name" value="Ribosomal protein L16p/L10e"/>
    <property type="match status" value="1"/>
</dbReference>
<dbReference type="PROSITE" id="PS00586">
    <property type="entry name" value="RIBOSOMAL_L16_1"/>
    <property type="match status" value="1"/>
</dbReference>
<dbReference type="PROSITE" id="PS00701">
    <property type="entry name" value="RIBOSOMAL_L16_2"/>
    <property type="match status" value="1"/>
</dbReference>
<comment type="function">
    <text evidence="1">Binds 23S rRNA and is also seen to make contacts with the A and possibly P site tRNAs.</text>
</comment>
<comment type="subunit">
    <text evidence="1">Part of the 50S ribosomal subunit.</text>
</comment>
<comment type="similarity">
    <text evidence="1">Belongs to the universal ribosomal protein uL16 family.</text>
</comment>